<name>ATPA_SACOF</name>
<keyword id="KW-0066">ATP synthesis</keyword>
<keyword id="KW-0067">ATP-binding</keyword>
<keyword id="KW-0139">CF(1)</keyword>
<keyword id="KW-0150">Chloroplast</keyword>
<keyword id="KW-0375">Hydrogen ion transport</keyword>
<keyword id="KW-0406">Ion transport</keyword>
<keyword id="KW-0472">Membrane</keyword>
<keyword id="KW-0547">Nucleotide-binding</keyword>
<keyword id="KW-0934">Plastid</keyword>
<keyword id="KW-0793">Thylakoid</keyword>
<keyword id="KW-1278">Translocase</keyword>
<keyword id="KW-0813">Transport</keyword>
<comment type="function">
    <text evidence="1">Produces ATP from ADP in the presence of a proton gradient across the membrane. The alpha chain is a regulatory subunit.</text>
</comment>
<comment type="catalytic activity">
    <reaction evidence="1">
        <text>ATP + H2O + 4 H(+)(in) = ADP + phosphate + 5 H(+)(out)</text>
        <dbReference type="Rhea" id="RHEA:57720"/>
        <dbReference type="ChEBI" id="CHEBI:15377"/>
        <dbReference type="ChEBI" id="CHEBI:15378"/>
        <dbReference type="ChEBI" id="CHEBI:30616"/>
        <dbReference type="ChEBI" id="CHEBI:43474"/>
        <dbReference type="ChEBI" id="CHEBI:456216"/>
        <dbReference type="EC" id="7.1.2.2"/>
    </reaction>
</comment>
<comment type="subunit">
    <text evidence="1">F-type ATPases have 2 components, CF(1) - the catalytic core - and CF(0) - the membrane proton channel. CF(1) has five subunits: alpha(3), beta(3), gamma(1), delta(1), epsilon(1). CF(0) has four main subunits: a, b, b' and c.</text>
</comment>
<comment type="subcellular location">
    <subcellularLocation>
        <location evidence="1">Plastid</location>
        <location evidence="1">Chloroplast thylakoid membrane</location>
        <topology evidence="1">Peripheral membrane protein</topology>
    </subcellularLocation>
</comment>
<comment type="similarity">
    <text evidence="1">Belongs to the ATPase alpha/beta chains family.</text>
</comment>
<accession>Q6ENW6</accession>
<sequence>MATLRVDEINKILRERIEQYNRKVGIENIGRVVQVGDGIARIIGLGEIMSGELVEFAEGTRGIALNLESKNVGIVLMGDGLMIQEGSFVKATGRIAQIPVSEAYLGRVINALAKPIDGRGEIVASESRLIESPAPGIISRRSVYEPLQTGLIAIDSMIPIGRGQRELIIGDRQTGKTAVATDTILNQKGQDVICVYVAIGQRASSVAQVVTTFHEEGAMEYTIVVAEMADSPATLQYLAPYTGAALAEYFMYRERHTLIIYDDLSKQAQAYRQMSLLLRRPPGREAYPGDVFYLHSRLLERAAKLNSLLGEGSMTALPIVETQSGDVSAYIPTNVISITDGQIFLSADLFNAGIRPAINVGISVSRVGSAAQIKAMKQVAGKSKLELAQFAELQAFAQFASALDKTSQNQLARGRRLRELLKQSQSNPLPVEEQVATIYTGTRGYLDSLEIEQVKKFLDELRKHLKDTKPQFQEIISSSKTFTEQAETLLKEAIQEQLERFSLQEQT</sequence>
<protein>
    <recommendedName>
        <fullName evidence="1">ATP synthase subunit alpha, chloroplastic</fullName>
        <ecNumber evidence="1">7.1.2.2</ecNumber>
    </recommendedName>
    <alternativeName>
        <fullName evidence="1">ATP synthase F1 sector subunit alpha</fullName>
    </alternativeName>
    <alternativeName>
        <fullName evidence="1">F-ATPase subunit alpha</fullName>
    </alternativeName>
</protein>
<reference key="1">
    <citation type="journal article" date="2004" name="DNA Res.">
        <title>Complete nucleotide sequence of the sugarcane (Saccharum officinarum) chloroplast genome: a comparative analysis of four monocot chloroplast genomes.</title>
        <authorList>
            <person name="Asano T."/>
            <person name="Tsudzuki T."/>
            <person name="Takahashi S."/>
            <person name="Shimada H."/>
            <person name="Kadowaki K."/>
        </authorList>
    </citation>
    <scope>NUCLEOTIDE SEQUENCE [LARGE SCALE GENOMIC DNA]</scope>
</reference>
<proteinExistence type="inferred from homology"/>
<gene>
    <name evidence="1" type="primary">atpA</name>
</gene>
<organism>
    <name type="scientific">Saccharum officinarum</name>
    <name type="common">Sugarcane</name>
    <dbReference type="NCBI Taxonomy" id="4547"/>
    <lineage>
        <taxon>Eukaryota</taxon>
        <taxon>Viridiplantae</taxon>
        <taxon>Streptophyta</taxon>
        <taxon>Embryophyta</taxon>
        <taxon>Tracheophyta</taxon>
        <taxon>Spermatophyta</taxon>
        <taxon>Magnoliopsida</taxon>
        <taxon>Liliopsida</taxon>
        <taxon>Poales</taxon>
        <taxon>Poaceae</taxon>
        <taxon>PACMAD clade</taxon>
        <taxon>Panicoideae</taxon>
        <taxon>Andropogonodae</taxon>
        <taxon>Andropogoneae</taxon>
        <taxon>Saccharinae</taxon>
        <taxon>Saccharum</taxon>
        <taxon>Saccharum officinarum species complex</taxon>
    </lineage>
</organism>
<evidence type="ECO:0000255" key="1">
    <source>
        <dbReference type="HAMAP-Rule" id="MF_01346"/>
    </source>
</evidence>
<geneLocation type="chloroplast"/>
<feature type="chain" id="PRO_0000226946" description="ATP synthase subunit alpha, chloroplastic">
    <location>
        <begin position="1"/>
        <end position="507"/>
    </location>
</feature>
<feature type="binding site" evidence="1">
    <location>
        <begin position="169"/>
        <end position="176"/>
    </location>
    <ligand>
        <name>ATP</name>
        <dbReference type="ChEBI" id="CHEBI:30616"/>
    </ligand>
</feature>
<feature type="site" description="Required for activity" evidence="1">
    <location>
        <position position="362"/>
    </location>
</feature>
<dbReference type="EC" id="7.1.2.2" evidence="1"/>
<dbReference type="EMBL" id="AP006714">
    <property type="protein sequence ID" value="BAD27290.1"/>
    <property type="molecule type" value="Genomic_DNA"/>
</dbReference>
<dbReference type="RefSeq" id="YP_009389568.1">
    <property type="nucleotide sequence ID" value="NC_035224.1"/>
</dbReference>
<dbReference type="SMR" id="Q6ENW6"/>
<dbReference type="GeneID" id="33347765"/>
<dbReference type="GO" id="GO:0009535">
    <property type="term" value="C:chloroplast thylakoid membrane"/>
    <property type="evidence" value="ECO:0007669"/>
    <property type="project" value="UniProtKB-SubCell"/>
</dbReference>
<dbReference type="GO" id="GO:0045259">
    <property type="term" value="C:proton-transporting ATP synthase complex"/>
    <property type="evidence" value="ECO:0007669"/>
    <property type="project" value="UniProtKB-KW"/>
</dbReference>
<dbReference type="GO" id="GO:0043531">
    <property type="term" value="F:ADP binding"/>
    <property type="evidence" value="ECO:0007669"/>
    <property type="project" value="TreeGrafter"/>
</dbReference>
<dbReference type="GO" id="GO:0005524">
    <property type="term" value="F:ATP binding"/>
    <property type="evidence" value="ECO:0007669"/>
    <property type="project" value="UniProtKB-UniRule"/>
</dbReference>
<dbReference type="GO" id="GO:0046933">
    <property type="term" value="F:proton-transporting ATP synthase activity, rotational mechanism"/>
    <property type="evidence" value="ECO:0007669"/>
    <property type="project" value="UniProtKB-UniRule"/>
</dbReference>
<dbReference type="CDD" id="cd18113">
    <property type="entry name" value="ATP-synt_F1_alpha_C"/>
    <property type="match status" value="1"/>
</dbReference>
<dbReference type="CDD" id="cd18116">
    <property type="entry name" value="ATP-synt_F1_alpha_N"/>
    <property type="match status" value="1"/>
</dbReference>
<dbReference type="CDD" id="cd01132">
    <property type="entry name" value="F1-ATPase_alpha_CD"/>
    <property type="match status" value="1"/>
</dbReference>
<dbReference type="FunFam" id="1.20.150.20:FF:000001">
    <property type="entry name" value="ATP synthase subunit alpha"/>
    <property type="match status" value="1"/>
</dbReference>
<dbReference type="FunFam" id="2.40.30.20:FF:000001">
    <property type="entry name" value="ATP synthase subunit alpha"/>
    <property type="match status" value="1"/>
</dbReference>
<dbReference type="FunFam" id="3.40.50.300:FF:000002">
    <property type="entry name" value="ATP synthase subunit alpha"/>
    <property type="match status" value="1"/>
</dbReference>
<dbReference type="Gene3D" id="2.40.30.20">
    <property type="match status" value="1"/>
</dbReference>
<dbReference type="Gene3D" id="1.20.150.20">
    <property type="entry name" value="ATP synthase alpha/beta chain, C-terminal domain"/>
    <property type="match status" value="1"/>
</dbReference>
<dbReference type="Gene3D" id="3.40.50.300">
    <property type="entry name" value="P-loop containing nucleotide triphosphate hydrolases"/>
    <property type="match status" value="1"/>
</dbReference>
<dbReference type="HAMAP" id="MF_01346">
    <property type="entry name" value="ATP_synth_alpha_bact"/>
    <property type="match status" value="1"/>
</dbReference>
<dbReference type="InterPro" id="IPR023366">
    <property type="entry name" value="ATP_synth_asu-like_sf"/>
</dbReference>
<dbReference type="InterPro" id="IPR000793">
    <property type="entry name" value="ATP_synth_asu_C"/>
</dbReference>
<dbReference type="InterPro" id="IPR038376">
    <property type="entry name" value="ATP_synth_asu_C_sf"/>
</dbReference>
<dbReference type="InterPro" id="IPR033732">
    <property type="entry name" value="ATP_synth_F1_a_nt-bd_dom"/>
</dbReference>
<dbReference type="InterPro" id="IPR005294">
    <property type="entry name" value="ATP_synth_F1_asu"/>
</dbReference>
<dbReference type="InterPro" id="IPR020003">
    <property type="entry name" value="ATPase_a/bsu_AS"/>
</dbReference>
<dbReference type="InterPro" id="IPR004100">
    <property type="entry name" value="ATPase_F1/V1/A1_a/bsu_N"/>
</dbReference>
<dbReference type="InterPro" id="IPR036121">
    <property type="entry name" value="ATPase_F1/V1/A1_a/bsu_N_sf"/>
</dbReference>
<dbReference type="InterPro" id="IPR000194">
    <property type="entry name" value="ATPase_F1/V1/A1_a/bsu_nucl-bd"/>
</dbReference>
<dbReference type="InterPro" id="IPR027417">
    <property type="entry name" value="P-loop_NTPase"/>
</dbReference>
<dbReference type="NCBIfam" id="TIGR00962">
    <property type="entry name" value="atpA"/>
    <property type="match status" value="1"/>
</dbReference>
<dbReference type="NCBIfam" id="NF009884">
    <property type="entry name" value="PRK13343.1"/>
    <property type="match status" value="1"/>
</dbReference>
<dbReference type="PANTHER" id="PTHR48082:SF6">
    <property type="entry name" value="ATP SYNTHASE SUBUNIT ALPHA, CHLOROPLASTIC"/>
    <property type="match status" value="1"/>
</dbReference>
<dbReference type="PANTHER" id="PTHR48082">
    <property type="entry name" value="ATP SYNTHASE SUBUNIT ALPHA, MITOCHONDRIAL"/>
    <property type="match status" value="1"/>
</dbReference>
<dbReference type="Pfam" id="PF00006">
    <property type="entry name" value="ATP-synt_ab"/>
    <property type="match status" value="1"/>
</dbReference>
<dbReference type="Pfam" id="PF00306">
    <property type="entry name" value="ATP-synt_ab_C"/>
    <property type="match status" value="1"/>
</dbReference>
<dbReference type="Pfam" id="PF02874">
    <property type="entry name" value="ATP-synt_ab_N"/>
    <property type="match status" value="1"/>
</dbReference>
<dbReference type="PIRSF" id="PIRSF039088">
    <property type="entry name" value="F_ATPase_subunit_alpha"/>
    <property type="match status" value="1"/>
</dbReference>
<dbReference type="SUPFAM" id="SSF47917">
    <property type="entry name" value="C-terminal domain of alpha and beta subunits of F1 ATP synthase"/>
    <property type="match status" value="1"/>
</dbReference>
<dbReference type="SUPFAM" id="SSF50615">
    <property type="entry name" value="N-terminal domain of alpha and beta subunits of F1 ATP synthase"/>
    <property type="match status" value="1"/>
</dbReference>
<dbReference type="SUPFAM" id="SSF52540">
    <property type="entry name" value="P-loop containing nucleoside triphosphate hydrolases"/>
    <property type="match status" value="1"/>
</dbReference>
<dbReference type="PROSITE" id="PS00152">
    <property type="entry name" value="ATPASE_ALPHA_BETA"/>
    <property type="match status" value="1"/>
</dbReference>